<name>CQ107_HUMAN</name>
<gene>
    <name type="primary">C17orf107</name>
</gene>
<accession>Q6ZR85</accession>
<feature type="chain" id="PRO_0000342338" description="Uncharacterized protein C17orf107">
    <location>
        <begin position="1"/>
        <end position="190"/>
    </location>
</feature>
<protein>
    <recommendedName>
        <fullName>Uncharacterized protein C17orf107</fullName>
    </recommendedName>
</protein>
<keyword id="KW-1267">Proteomics identification</keyword>
<keyword id="KW-1185">Reference proteome</keyword>
<proteinExistence type="evidence at protein level"/>
<dbReference type="EMBL" id="AK128415">
    <property type="protein sequence ID" value="BAC87429.1"/>
    <property type="molecule type" value="mRNA"/>
</dbReference>
<dbReference type="CCDS" id="CCDS45591.1"/>
<dbReference type="RefSeq" id="NP_001139008.1">
    <property type="nucleotide sequence ID" value="NM_001145536.2"/>
</dbReference>
<dbReference type="STRING" id="9606.ENSP00000370770"/>
<dbReference type="BioMuta" id="C17orf107"/>
<dbReference type="DMDM" id="74711085"/>
<dbReference type="MassIVE" id="Q6ZR85"/>
<dbReference type="PaxDb" id="9606-ENSP00000370770"/>
<dbReference type="PeptideAtlas" id="Q6ZR85"/>
<dbReference type="ProteomicsDB" id="68117"/>
<dbReference type="Antibodypedia" id="71247">
    <property type="antibodies" value="13 antibodies from 6 providers"/>
</dbReference>
<dbReference type="DNASU" id="100130311"/>
<dbReference type="Ensembl" id="ENST00000381365.4">
    <property type="protein sequence ID" value="ENSP00000370770.3"/>
    <property type="gene ID" value="ENSG00000205710.4"/>
</dbReference>
<dbReference type="GeneID" id="100130311"/>
<dbReference type="KEGG" id="hsa:100130311"/>
<dbReference type="MANE-Select" id="ENST00000381365.4">
    <property type="protein sequence ID" value="ENSP00000370770.3"/>
    <property type="RefSeq nucleotide sequence ID" value="NM_001145536.2"/>
    <property type="RefSeq protein sequence ID" value="NP_001139008.1"/>
</dbReference>
<dbReference type="UCSC" id="uc002fzl.4">
    <property type="organism name" value="human"/>
</dbReference>
<dbReference type="AGR" id="HGNC:37238"/>
<dbReference type="CTD" id="100130311"/>
<dbReference type="DisGeNET" id="100130311"/>
<dbReference type="GeneCards" id="C17orf107"/>
<dbReference type="HGNC" id="HGNC:37238">
    <property type="gene designation" value="C17orf107"/>
</dbReference>
<dbReference type="HPA" id="ENSG00000205710">
    <property type="expression patterns" value="Tissue enhanced (heart muscle, pituitary gland)"/>
</dbReference>
<dbReference type="MalaCards" id="C17orf107"/>
<dbReference type="neXtProt" id="NX_Q6ZR85"/>
<dbReference type="PharmGKB" id="PA165431617"/>
<dbReference type="VEuPathDB" id="HostDB:ENSG00000205710"/>
<dbReference type="eggNOG" id="ENOG502RR39">
    <property type="taxonomic scope" value="Eukaryota"/>
</dbReference>
<dbReference type="GeneTree" id="ENSGT00400000024234"/>
<dbReference type="HOGENOM" id="CLU_1492475_0_0_1"/>
<dbReference type="InParanoid" id="Q6ZR85"/>
<dbReference type="OMA" id="YHYHSST"/>
<dbReference type="OrthoDB" id="9629713at2759"/>
<dbReference type="PAN-GO" id="Q6ZR85">
    <property type="GO annotations" value="0 GO annotations based on evolutionary models"/>
</dbReference>
<dbReference type="PhylomeDB" id="Q6ZR85"/>
<dbReference type="TreeFam" id="TF353931"/>
<dbReference type="PathwayCommons" id="Q6ZR85"/>
<dbReference type="SignaLink" id="Q6ZR85"/>
<dbReference type="BioGRID-ORCS" id="100130311">
    <property type="hits" value="9 hits in 1112 CRISPR screens"/>
</dbReference>
<dbReference type="GenomeRNAi" id="100130311"/>
<dbReference type="Pharos" id="Q6ZR85">
    <property type="development level" value="Tdark"/>
</dbReference>
<dbReference type="PRO" id="PR:Q6ZR85"/>
<dbReference type="Proteomes" id="UP000005640">
    <property type="component" value="Chromosome 17"/>
</dbReference>
<dbReference type="RNAct" id="Q6ZR85">
    <property type="molecule type" value="protein"/>
</dbReference>
<dbReference type="Bgee" id="ENSG00000205710">
    <property type="expression patterns" value="Expressed in adenohypophysis and 99 other cell types or tissues"/>
</dbReference>
<dbReference type="ExpressionAtlas" id="Q6ZR85">
    <property type="expression patterns" value="baseline and differential"/>
</dbReference>
<dbReference type="InterPro" id="IPR038963">
    <property type="entry name" value="C17orf107"/>
</dbReference>
<dbReference type="PANTHER" id="PTHR38506">
    <property type="entry name" value="RIKEN CDNA 4930544D05 GENE"/>
    <property type="match status" value="1"/>
</dbReference>
<dbReference type="PANTHER" id="PTHR38506:SF1">
    <property type="entry name" value="RIKEN CDNA 4930544D05 GENE"/>
    <property type="match status" value="1"/>
</dbReference>
<dbReference type="Pfam" id="PF17688">
    <property type="entry name" value="DUF5536"/>
    <property type="match status" value="1"/>
</dbReference>
<organism>
    <name type="scientific">Homo sapiens</name>
    <name type="common">Human</name>
    <dbReference type="NCBI Taxonomy" id="9606"/>
    <lineage>
        <taxon>Eukaryota</taxon>
        <taxon>Metazoa</taxon>
        <taxon>Chordata</taxon>
        <taxon>Craniata</taxon>
        <taxon>Vertebrata</taxon>
        <taxon>Euteleostomi</taxon>
        <taxon>Mammalia</taxon>
        <taxon>Eutheria</taxon>
        <taxon>Euarchontoglires</taxon>
        <taxon>Primates</taxon>
        <taxon>Haplorrhini</taxon>
        <taxon>Catarrhini</taxon>
        <taxon>Hominidae</taxon>
        <taxon>Homo</taxon>
    </lineage>
</organism>
<sequence length="190" mass="19931">MKGTPSSLDTLMWIYHFHSSTEVALQPPLLSSLELSVAAAHEYLEQRFRELKSLEPPEPKMQGMLPAPKPTLGLVLREATASLVSFGTTLLEISALWLQQEARRLDGSAGPAPDGRDPGAALSRVAQAAGQGVRQAGAAVGASARLLVQGAWLCLCGRGLQGSASFLRQSQQQLGLGIPGEPVSSGHGVS</sequence>
<reference key="1">
    <citation type="journal article" date="2004" name="Nat. Genet.">
        <title>Complete sequencing and characterization of 21,243 full-length human cDNAs.</title>
        <authorList>
            <person name="Ota T."/>
            <person name="Suzuki Y."/>
            <person name="Nishikawa T."/>
            <person name="Otsuki T."/>
            <person name="Sugiyama T."/>
            <person name="Irie R."/>
            <person name="Wakamatsu A."/>
            <person name="Hayashi K."/>
            <person name="Sato H."/>
            <person name="Nagai K."/>
            <person name="Kimura K."/>
            <person name="Makita H."/>
            <person name="Sekine M."/>
            <person name="Obayashi M."/>
            <person name="Nishi T."/>
            <person name="Shibahara T."/>
            <person name="Tanaka T."/>
            <person name="Ishii S."/>
            <person name="Yamamoto J."/>
            <person name="Saito K."/>
            <person name="Kawai Y."/>
            <person name="Isono Y."/>
            <person name="Nakamura Y."/>
            <person name="Nagahari K."/>
            <person name="Murakami K."/>
            <person name="Yasuda T."/>
            <person name="Iwayanagi T."/>
            <person name="Wagatsuma M."/>
            <person name="Shiratori A."/>
            <person name="Sudo H."/>
            <person name="Hosoiri T."/>
            <person name="Kaku Y."/>
            <person name="Kodaira H."/>
            <person name="Kondo H."/>
            <person name="Sugawara M."/>
            <person name="Takahashi M."/>
            <person name="Kanda K."/>
            <person name="Yokoi T."/>
            <person name="Furuya T."/>
            <person name="Kikkawa E."/>
            <person name="Omura Y."/>
            <person name="Abe K."/>
            <person name="Kamihara K."/>
            <person name="Katsuta N."/>
            <person name="Sato K."/>
            <person name="Tanikawa M."/>
            <person name="Yamazaki M."/>
            <person name="Ninomiya K."/>
            <person name="Ishibashi T."/>
            <person name="Yamashita H."/>
            <person name="Murakawa K."/>
            <person name="Fujimori K."/>
            <person name="Tanai H."/>
            <person name="Kimata M."/>
            <person name="Watanabe M."/>
            <person name="Hiraoka S."/>
            <person name="Chiba Y."/>
            <person name="Ishida S."/>
            <person name="Ono Y."/>
            <person name="Takiguchi S."/>
            <person name="Watanabe S."/>
            <person name="Yosida M."/>
            <person name="Hotuta T."/>
            <person name="Kusano J."/>
            <person name="Kanehori K."/>
            <person name="Takahashi-Fujii A."/>
            <person name="Hara H."/>
            <person name="Tanase T.-O."/>
            <person name="Nomura Y."/>
            <person name="Togiya S."/>
            <person name="Komai F."/>
            <person name="Hara R."/>
            <person name="Takeuchi K."/>
            <person name="Arita M."/>
            <person name="Imose N."/>
            <person name="Musashino K."/>
            <person name="Yuuki H."/>
            <person name="Oshima A."/>
            <person name="Sasaki N."/>
            <person name="Aotsuka S."/>
            <person name="Yoshikawa Y."/>
            <person name="Matsunawa H."/>
            <person name="Ichihara T."/>
            <person name="Shiohata N."/>
            <person name="Sano S."/>
            <person name="Moriya S."/>
            <person name="Momiyama H."/>
            <person name="Satoh N."/>
            <person name="Takami S."/>
            <person name="Terashima Y."/>
            <person name="Suzuki O."/>
            <person name="Nakagawa S."/>
            <person name="Senoh A."/>
            <person name="Mizoguchi H."/>
            <person name="Goto Y."/>
            <person name="Shimizu F."/>
            <person name="Wakebe H."/>
            <person name="Hishigaki H."/>
            <person name="Watanabe T."/>
            <person name="Sugiyama A."/>
            <person name="Takemoto M."/>
            <person name="Kawakami B."/>
            <person name="Yamazaki M."/>
            <person name="Watanabe K."/>
            <person name="Kumagai A."/>
            <person name="Itakura S."/>
            <person name="Fukuzumi Y."/>
            <person name="Fujimori Y."/>
            <person name="Komiyama M."/>
            <person name="Tashiro H."/>
            <person name="Tanigami A."/>
            <person name="Fujiwara T."/>
            <person name="Ono T."/>
            <person name="Yamada K."/>
            <person name="Fujii Y."/>
            <person name="Ozaki K."/>
            <person name="Hirao M."/>
            <person name="Ohmori Y."/>
            <person name="Kawabata A."/>
            <person name="Hikiji T."/>
            <person name="Kobatake N."/>
            <person name="Inagaki H."/>
            <person name="Ikema Y."/>
            <person name="Okamoto S."/>
            <person name="Okitani R."/>
            <person name="Kawakami T."/>
            <person name="Noguchi S."/>
            <person name="Itoh T."/>
            <person name="Shigeta K."/>
            <person name="Senba T."/>
            <person name="Matsumura K."/>
            <person name="Nakajima Y."/>
            <person name="Mizuno T."/>
            <person name="Morinaga M."/>
            <person name="Sasaki M."/>
            <person name="Togashi T."/>
            <person name="Oyama M."/>
            <person name="Hata H."/>
            <person name="Watanabe M."/>
            <person name="Komatsu T."/>
            <person name="Mizushima-Sugano J."/>
            <person name="Satoh T."/>
            <person name="Shirai Y."/>
            <person name="Takahashi Y."/>
            <person name="Nakagawa K."/>
            <person name="Okumura K."/>
            <person name="Nagase T."/>
            <person name="Nomura N."/>
            <person name="Kikuchi H."/>
            <person name="Masuho Y."/>
            <person name="Yamashita R."/>
            <person name="Nakai K."/>
            <person name="Yada T."/>
            <person name="Nakamura Y."/>
            <person name="Ohara O."/>
            <person name="Isogai T."/>
            <person name="Sugano S."/>
        </authorList>
    </citation>
    <scope>NUCLEOTIDE SEQUENCE [LARGE SCALE MRNA]</scope>
    <source>
        <tissue>Thymus</tissue>
    </source>
</reference>